<keyword id="KW-0012">Acyltransferase</keyword>
<keyword id="KW-0021">Allosteric enzyme</keyword>
<keyword id="KW-0175">Coiled coil</keyword>
<keyword id="KW-0210">Decarboxylase</keyword>
<keyword id="KW-0456">Lyase</keyword>
<keyword id="KW-0460">Magnesium</keyword>
<keyword id="KW-0479">Metal-binding</keyword>
<keyword id="KW-0511">Multifunctional enzyme</keyword>
<keyword id="KW-0560">Oxidoreductase</keyword>
<keyword id="KW-1185">Reference proteome</keyword>
<keyword id="KW-0786">Thiamine pyrophosphate</keyword>
<keyword id="KW-0808">Transferase</keyword>
<keyword id="KW-0816">Tricarboxylic acid cycle</keyword>
<feature type="chain" id="PRO_0000310722" description="Multifunctional 2-oxoglutarate metabolism enzyme">
    <location>
        <begin position="1"/>
        <end position="1231"/>
    </location>
</feature>
<feature type="region of interest" description="2-oxoglutarate dehydrogenase E1, N-terminal part">
    <location>
        <begin position="1"/>
        <end position="41"/>
    </location>
</feature>
<feature type="region of interest" description="Disordered" evidence="4">
    <location>
        <begin position="38"/>
        <end position="79"/>
    </location>
</feature>
<feature type="region of interest" description="Linker">
    <location>
        <begin position="42"/>
        <end position="88"/>
    </location>
</feature>
<feature type="region of interest" description="Succinyltransferase E2">
    <location>
        <begin position="89"/>
        <end position="337"/>
    </location>
</feature>
<feature type="region of interest" description="2-oxoglutarate dehydrogenase E1, C-terminal part">
    <location>
        <begin position="338"/>
        <end position="1231"/>
    </location>
</feature>
<feature type="coiled-coil region" evidence="3">
    <location>
        <begin position="787"/>
        <end position="817"/>
    </location>
</feature>
<feature type="compositionally biased region" description="Low complexity" evidence="4">
    <location>
        <begin position="58"/>
        <end position="69"/>
    </location>
</feature>
<feature type="active site" description="Proton acceptor; for succinyltransferase activity" evidence="1">
    <location>
        <position position="316"/>
    </location>
</feature>
<feature type="binding site" evidence="2">
    <location>
        <position position="542"/>
    </location>
    <ligand>
        <name>thiamine diphosphate</name>
        <dbReference type="ChEBI" id="CHEBI:58937"/>
    </ligand>
</feature>
<feature type="binding site" evidence="2">
    <location>
        <position position="581"/>
    </location>
    <ligand>
        <name>2-oxoglutarate</name>
        <dbReference type="ChEBI" id="CHEBI:16810"/>
    </ligand>
</feature>
<feature type="binding site" evidence="2">
    <location>
        <position position="606"/>
    </location>
    <ligand>
        <name>2-oxoglutarate</name>
        <dbReference type="ChEBI" id="CHEBI:16810"/>
    </ligand>
</feature>
<feature type="binding site" evidence="2">
    <location>
        <position position="606"/>
    </location>
    <ligand>
        <name>thiamine diphosphate</name>
        <dbReference type="ChEBI" id="CHEBI:58937"/>
    </ligand>
</feature>
<feature type="binding site" evidence="2">
    <location>
        <position position="608"/>
    </location>
    <ligand>
        <name>thiamine diphosphate</name>
        <dbReference type="ChEBI" id="CHEBI:58937"/>
    </ligand>
</feature>
<feature type="binding site" evidence="2">
    <location>
        <position position="649"/>
    </location>
    <ligand>
        <name>Mg(2+)</name>
        <dbReference type="ChEBI" id="CHEBI:18420"/>
    </ligand>
</feature>
<feature type="binding site" evidence="2">
    <location>
        <position position="649"/>
    </location>
    <ligand>
        <name>thiamine diphosphate</name>
        <dbReference type="ChEBI" id="CHEBI:58937"/>
    </ligand>
</feature>
<feature type="binding site" evidence="2">
    <location>
        <position position="650"/>
    </location>
    <ligand>
        <name>thiamine diphosphate</name>
        <dbReference type="ChEBI" id="CHEBI:58937"/>
    </ligand>
</feature>
<feature type="binding site" evidence="2">
    <location>
        <position position="651"/>
    </location>
    <ligand>
        <name>thiamine diphosphate</name>
        <dbReference type="ChEBI" id="CHEBI:58937"/>
    </ligand>
</feature>
<feature type="binding site" evidence="2">
    <location>
        <position position="682"/>
    </location>
    <ligand>
        <name>Mg(2+)</name>
        <dbReference type="ChEBI" id="CHEBI:18420"/>
    </ligand>
</feature>
<feature type="binding site" evidence="2">
    <location>
        <position position="682"/>
    </location>
    <ligand>
        <name>thiamine diphosphate</name>
        <dbReference type="ChEBI" id="CHEBI:58937"/>
    </ligand>
</feature>
<feature type="binding site" evidence="2">
    <location>
        <position position="684"/>
    </location>
    <ligand>
        <name>Mg(2+)</name>
        <dbReference type="ChEBI" id="CHEBI:18420"/>
    </ligand>
</feature>
<feature type="binding site" evidence="2">
    <location>
        <position position="1024"/>
    </location>
    <ligand>
        <name>2-oxoglutarate</name>
        <dbReference type="ChEBI" id="CHEBI:16810"/>
    </ligand>
</feature>
<feature type="binding site" evidence="2">
    <location>
        <position position="1042"/>
    </location>
    <ligand>
        <name>acetyl-CoA</name>
        <dbReference type="ChEBI" id="CHEBI:57288"/>
        <note>allosteric activator</note>
    </ligand>
</feature>
<feature type="binding site" evidence="2">
    <location>
        <position position="1058"/>
    </location>
    <ligand>
        <name>acetyl-CoA</name>
        <dbReference type="ChEBI" id="CHEBI:57288"/>
        <note>allosteric activator</note>
    </ligand>
</feature>
<feature type="binding site" evidence="2">
    <location>
        <position position="1093"/>
    </location>
    <ligand>
        <name>acetyl-CoA</name>
        <dbReference type="ChEBI" id="CHEBI:57288"/>
        <note>allosteric activator</note>
    </ligand>
</feature>
<feature type="binding site" evidence="2">
    <location>
        <position position="1096"/>
    </location>
    <ligand>
        <name>acetyl-CoA</name>
        <dbReference type="ChEBI" id="CHEBI:57288"/>
        <note>allosteric activator</note>
    </ligand>
</feature>
<feature type="binding site" evidence="2">
    <location>
        <position position="1146"/>
    </location>
    <ligand>
        <name>acetyl-CoA</name>
        <dbReference type="ChEBI" id="CHEBI:57288"/>
        <note>allosteric activator</note>
    </ligand>
</feature>
<feature type="binding site" evidence="2">
    <location>
        <position position="1153"/>
    </location>
    <ligand>
        <name>acetyl-CoA</name>
        <dbReference type="ChEBI" id="CHEBI:57288"/>
        <note>allosteric activator</note>
    </ligand>
</feature>
<feature type="binding site" evidence="2">
    <location>
        <position position="1154"/>
    </location>
    <ligand>
        <name>acetyl-CoA</name>
        <dbReference type="ChEBI" id="CHEBI:57288"/>
        <note>allosteric activator</note>
    </ligand>
</feature>
<dbReference type="EC" id="2.2.1.5" evidence="9"/>
<dbReference type="EC" id="4.1.1.71" evidence="5"/>
<dbReference type="EC" id="1.2.4.2" evidence="10"/>
<dbReference type="EC" id="2.3.1.61" evidence="10"/>
<dbReference type="EMBL" id="AL123456">
    <property type="protein sequence ID" value="CCP44004.1"/>
    <property type="molecule type" value="Genomic_DNA"/>
</dbReference>
<dbReference type="PIR" id="G70953">
    <property type="entry name" value="G70953"/>
</dbReference>
<dbReference type="RefSeq" id="NP_215764.2">
    <property type="nucleotide sequence ID" value="NC_000962.3"/>
</dbReference>
<dbReference type="RefSeq" id="WP_003898790.1">
    <property type="nucleotide sequence ID" value="NZ_NVQJ01000049.1"/>
</dbReference>
<dbReference type="SMR" id="P9WIS5"/>
<dbReference type="FunCoup" id="P9WIS5">
    <property type="interactions" value="444"/>
</dbReference>
<dbReference type="IntAct" id="P9WIS5">
    <property type="interactions" value="1"/>
</dbReference>
<dbReference type="STRING" id="83332.Rv1248c"/>
<dbReference type="PaxDb" id="83332-Rv1248c"/>
<dbReference type="DNASU" id="887084"/>
<dbReference type="GeneID" id="887084"/>
<dbReference type="KEGG" id="mtu:Rv1248c"/>
<dbReference type="KEGG" id="mtv:RVBD_1248c"/>
<dbReference type="TubercuList" id="Rv1248c"/>
<dbReference type="eggNOG" id="COG0508">
    <property type="taxonomic scope" value="Bacteria"/>
</dbReference>
<dbReference type="eggNOG" id="COG0567">
    <property type="taxonomic scope" value="Bacteria"/>
</dbReference>
<dbReference type="InParanoid" id="P9WIS5"/>
<dbReference type="OrthoDB" id="9759785at2"/>
<dbReference type="PhylomeDB" id="P9WIS5"/>
<dbReference type="BioCyc" id="MetaCyc:G185E-5419-MONOMER"/>
<dbReference type="BRENDA" id="2.2.1.5">
    <property type="organism ID" value="3445"/>
</dbReference>
<dbReference type="SABIO-RK" id="P9WIS5"/>
<dbReference type="UniPathway" id="UPA00223">
    <property type="reaction ID" value="UER00997"/>
</dbReference>
<dbReference type="UniPathway" id="UPA00223">
    <property type="reaction ID" value="UER01001"/>
</dbReference>
<dbReference type="Proteomes" id="UP000001584">
    <property type="component" value="Chromosome"/>
</dbReference>
<dbReference type="GO" id="GO:0005829">
    <property type="term" value="C:cytosol"/>
    <property type="evidence" value="ECO:0000318"/>
    <property type="project" value="GO_Central"/>
</dbReference>
<dbReference type="GO" id="GO:0045252">
    <property type="term" value="C:oxoglutarate dehydrogenase complex"/>
    <property type="evidence" value="ECO:0000318"/>
    <property type="project" value="GO_Central"/>
</dbReference>
<dbReference type="GO" id="GO:0009274">
    <property type="term" value="C:peptidoglycan-based cell wall"/>
    <property type="evidence" value="ECO:0007005"/>
    <property type="project" value="MTBBASE"/>
</dbReference>
<dbReference type="GO" id="GO:0005886">
    <property type="term" value="C:plasma membrane"/>
    <property type="evidence" value="ECO:0007005"/>
    <property type="project" value="MTBBASE"/>
</dbReference>
<dbReference type="GO" id="GO:0045254">
    <property type="term" value="C:pyruvate dehydrogenase complex"/>
    <property type="evidence" value="ECO:0000314"/>
    <property type="project" value="MTBBASE"/>
</dbReference>
<dbReference type="GO" id="GO:0050439">
    <property type="term" value="F:2-hydroxy-3-oxoadipate synthase activity"/>
    <property type="evidence" value="ECO:0000314"/>
    <property type="project" value="MTBBASE"/>
</dbReference>
<dbReference type="GO" id="GO:0008683">
    <property type="term" value="F:2-oxoglutarate decarboxylase activity"/>
    <property type="evidence" value="ECO:0000314"/>
    <property type="project" value="MTBBASE"/>
</dbReference>
<dbReference type="GO" id="GO:0004149">
    <property type="term" value="F:dihydrolipoyllysine-residue succinyltransferase activity"/>
    <property type="evidence" value="ECO:0007669"/>
    <property type="project" value="UniProtKB-EC"/>
</dbReference>
<dbReference type="GO" id="GO:0000287">
    <property type="term" value="F:magnesium ion binding"/>
    <property type="evidence" value="ECO:0000314"/>
    <property type="project" value="MTBBASE"/>
</dbReference>
<dbReference type="GO" id="GO:0016491">
    <property type="term" value="F:oxidoreductase activity"/>
    <property type="evidence" value="ECO:0000314"/>
    <property type="project" value="UniProtKB"/>
</dbReference>
<dbReference type="GO" id="GO:0016624">
    <property type="term" value="F:oxidoreductase activity, acting on the aldehyde or oxo group of donors, disulfide as acceptor"/>
    <property type="evidence" value="ECO:0007669"/>
    <property type="project" value="InterPro"/>
</dbReference>
<dbReference type="GO" id="GO:0030976">
    <property type="term" value="F:thiamine pyrophosphate binding"/>
    <property type="evidence" value="ECO:0007669"/>
    <property type="project" value="InterPro"/>
</dbReference>
<dbReference type="GO" id="GO:0006103">
    <property type="term" value="P:2-oxoglutarate metabolic process"/>
    <property type="evidence" value="ECO:0000314"/>
    <property type="project" value="MTBBASE"/>
</dbReference>
<dbReference type="GO" id="GO:0006105">
    <property type="term" value="P:succinate metabolic process"/>
    <property type="evidence" value="ECO:0000314"/>
    <property type="project" value="MTBBASE"/>
</dbReference>
<dbReference type="GO" id="GO:0006099">
    <property type="term" value="P:tricarboxylic acid cycle"/>
    <property type="evidence" value="ECO:0000314"/>
    <property type="project" value="MTBBASE"/>
</dbReference>
<dbReference type="CDD" id="cd02016">
    <property type="entry name" value="TPP_E1_OGDC_like"/>
    <property type="match status" value="1"/>
</dbReference>
<dbReference type="FunFam" id="3.30.559.10:FF:000011">
    <property type="entry name" value="2-oxoglutarate dehydrogenase E1 component"/>
    <property type="match status" value="1"/>
</dbReference>
<dbReference type="FunFam" id="3.40.50.11610:FF:000002">
    <property type="entry name" value="2-oxoglutarate dehydrogenase E1 component"/>
    <property type="match status" value="1"/>
</dbReference>
<dbReference type="FunFam" id="3.40.50.970:FF:000018">
    <property type="entry name" value="2-oxoglutarate dehydrogenase E1 component"/>
    <property type="match status" value="1"/>
</dbReference>
<dbReference type="Gene3D" id="3.40.50.12470">
    <property type="match status" value="1"/>
</dbReference>
<dbReference type="Gene3D" id="3.40.50.970">
    <property type="match status" value="1"/>
</dbReference>
<dbReference type="Gene3D" id="3.30.559.10">
    <property type="entry name" value="Chloramphenicol acetyltransferase-like domain"/>
    <property type="match status" value="1"/>
</dbReference>
<dbReference type="Gene3D" id="3.40.50.11610">
    <property type="entry name" value="Multifunctional 2-oxoglutarate metabolism enzyme, C-terminal domain"/>
    <property type="match status" value="1"/>
</dbReference>
<dbReference type="Gene3D" id="1.10.287.1150">
    <property type="entry name" value="TPP helical domain"/>
    <property type="match status" value="1"/>
</dbReference>
<dbReference type="InterPro" id="IPR001078">
    <property type="entry name" value="2-oxoacid_DH_actylTfrase"/>
</dbReference>
<dbReference type="InterPro" id="IPR032106">
    <property type="entry name" value="2-oxogl_dehyd_N"/>
</dbReference>
<dbReference type="InterPro" id="IPR011603">
    <property type="entry name" value="2oxoglutarate_DH_E1"/>
</dbReference>
<dbReference type="InterPro" id="IPR023213">
    <property type="entry name" value="CAT-like_dom_sf"/>
</dbReference>
<dbReference type="InterPro" id="IPR001017">
    <property type="entry name" value="DH_E1"/>
</dbReference>
<dbReference type="InterPro" id="IPR042179">
    <property type="entry name" value="KGD_C_sf"/>
</dbReference>
<dbReference type="InterPro" id="IPR031717">
    <property type="entry name" value="ODO-1/KGD_C"/>
</dbReference>
<dbReference type="InterPro" id="IPR029061">
    <property type="entry name" value="THDP-binding"/>
</dbReference>
<dbReference type="InterPro" id="IPR005475">
    <property type="entry name" value="Transketolase-like_Pyr-bd"/>
</dbReference>
<dbReference type="NCBIfam" id="TIGR00239">
    <property type="entry name" value="2oxo_dh_E1"/>
    <property type="match status" value="1"/>
</dbReference>
<dbReference type="NCBIfam" id="NF006914">
    <property type="entry name" value="PRK09404.1"/>
    <property type="match status" value="1"/>
</dbReference>
<dbReference type="NCBIfam" id="NF008907">
    <property type="entry name" value="PRK12270.1"/>
    <property type="match status" value="1"/>
</dbReference>
<dbReference type="PANTHER" id="PTHR23152:SF4">
    <property type="entry name" value="2-OXOADIPATE DEHYDROGENASE COMPLEX COMPONENT E1"/>
    <property type="match status" value="1"/>
</dbReference>
<dbReference type="PANTHER" id="PTHR23152">
    <property type="entry name" value="2-OXOGLUTARATE DEHYDROGENASE"/>
    <property type="match status" value="1"/>
</dbReference>
<dbReference type="Pfam" id="PF00198">
    <property type="entry name" value="2-oxoacid_dh"/>
    <property type="match status" value="1"/>
</dbReference>
<dbReference type="Pfam" id="PF16078">
    <property type="entry name" value="2-oxogl_dehyd_N"/>
    <property type="match status" value="1"/>
</dbReference>
<dbReference type="Pfam" id="PF00676">
    <property type="entry name" value="E1_dh"/>
    <property type="match status" value="1"/>
</dbReference>
<dbReference type="Pfam" id="PF16870">
    <property type="entry name" value="OxoGdeHyase_C"/>
    <property type="match status" value="1"/>
</dbReference>
<dbReference type="Pfam" id="PF02779">
    <property type="entry name" value="Transket_pyr"/>
    <property type="match status" value="1"/>
</dbReference>
<dbReference type="PIRSF" id="PIRSF000157">
    <property type="entry name" value="Oxoglu_dh_E1"/>
    <property type="match status" value="1"/>
</dbReference>
<dbReference type="SMART" id="SM00861">
    <property type="entry name" value="Transket_pyr"/>
    <property type="match status" value="1"/>
</dbReference>
<dbReference type="SUPFAM" id="SSF52777">
    <property type="entry name" value="CoA-dependent acyltransferases"/>
    <property type="match status" value="1"/>
</dbReference>
<dbReference type="SUPFAM" id="SSF52518">
    <property type="entry name" value="Thiamin diphosphate-binding fold (THDP-binding)"/>
    <property type="match status" value="2"/>
</dbReference>
<evidence type="ECO:0000250" key="1"/>
<evidence type="ECO:0000250" key="2">
    <source>
        <dbReference type="UniProtKB" id="A0R2B1"/>
    </source>
</evidence>
<evidence type="ECO:0000255" key="3"/>
<evidence type="ECO:0000256" key="4">
    <source>
        <dbReference type="SAM" id="MobiDB-lite"/>
    </source>
</evidence>
<evidence type="ECO:0000269" key="5">
    <source>
    </source>
</evidence>
<evidence type="ECO:0000269" key="6">
    <source>
    </source>
</evidence>
<evidence type="ECO:0000269" key="7">
    <source>
    </source>
</evidence>
<evidence type="ECO:0000269" key="8">
    <source>
    </source>
</evidence>
<evidence type="ECO:0000269" key="9">
    <source>
    </source>
</evidence>
<evidence type="ECO:0000269" key="10">
    <source>
    </source>
</evidence>
<evidence type="ECO:0000303" key="11">
    <source>
    </source>
</evidence>
<evidence type="ECO:0000303" key="12">
    <source>
    </source>
</evidence>
<evidence type="ECO:0000305" key="13"/>
<evidence type="ECO:0000305" key="14">
    <source>
    </source>
</evidence>
<evidence type="ECO:0000305" key="15">
    <source>
    </source>
</evidence>
<proteinExistence type="evidence at protein level"/>
<organism>
    <name type="scientific">Mycobacterium tuberculosis (strain ATCC 25618 / H37Rv)</name>
    <dbReference type="NCBI Taxonomy" id="83332"/>
    <lineage>
        <taxon>Bacteria</taxon>
        <taxon>Bacillati</taxon>
        <taxon>Actinomycetota</taxon>
        <taxon>Actinomycetes</taxon>
        <taxon>Mycobacteriales</taxon>
        <taxon>Mycobacteriaceae</taxon>
        <taxon>Mycobacterium</taxon>
        <taxon>Mycobacterium tuberculosis complex</taxon>
    </lineage>
</organism>
<accession>P9WIS5</accession>
<accession>L0T8T9</accession>
<accession>O50463</accession>
<accession>Q7D8I9</accession>
<gene>
    <name type="primary">kgd</name>
    <name type="ordered locus">Rv1248c</name>
</gene>
<reference key="1">
    <citation type="journal article" date="1998" name="Nature">
        <title>Deciphering the biology of Mycobacterium tuberculosis from the complete genome sequence.</title>
        <authorList>
            <person name="Cole S.T."/>
            <person name="Brosch R."/>
            <person name="Parkhill J."/>
            <person name="Garnier T."/>
            <person name="Churcher C.M."/>
            <person name="Harris D.E."/>
            <person name="Gordon S.V."/>
            <person name="Eiglmeier K."/>
            <person name="Gas S."/>
            <person name="Barry C.E. III"/>
            <person name="Tekaia F."/>
            <person name="Badcock K."/>
            <person name="Basham D."/>
            <person name="Brown D."/>
            <person name="Chillingworth T."/>
            <person name="Connor R."/>
            <person name="Davies R.M."/>
            <person name="Devlin K."/>
            <person name="Feltwell T."/>
            <person name="Gentles S."/>
            <person name="Hamlin N."/>
            <person name="Holroyd S."/>
            <person name="Hornsby T."/>
            <person name="Jagels K."/>
            <person name="Krogh A."/>
            <person name="McLean J."/>
            <person name="Moule S."/>
            <person name="Murphy L.D."/>
            <person name="Oliver S."/>
            <person name="Osborne J."/>
            <person name="Quail M.A."/>
            <person name="Rajandream M.A."/>
            <person name="Rogers J."/>
            <person name="Rutter S."/>
            <person name="Seeger K."/>
            <person name="Skelton S."/>
            <person name="Squares S."/>
            <person name="Squares R."/>
            <person name="Sulston J.E."/>
            <person name="Taylor K."/>
            <person name="Whitehead S."/>
            <person name="Barrell B.G."/>
        </authorList>
    </citation>
    <scope>NUCLEOTIDE SEQUENCE [LARGE SCALE GENOMIC DNA]</scope>
    <source>
        <strain>ATCC 25618 / H37Rv</strain>
    </source>
</reference>
<reference key="2">
    <citation type="journal article" date="2005" name="Mol. Microbiol.">
        <title>Mycobacterium tuberculosis appears to lack alpha-ketoglutarate dehydrogenase and encodes pyruvate dehydrogenase in widely separated genes.</title>
        <authorList>
            <person name="Tian J."/>
            <person name="Bryk R."/>
            <person name="Shi S."/>
            <person name="Erdjument-Bromage H."/>
            <person name="Tempst P."/>
            <person name="Nathan C."/>
        </authorList>
    </citation>
    <scope>LACK OF FUNCTION AS A 2-OXOGLUTARATE DEHYDROGENASE COMPONENT</scope>
    <source>
        <strain>ATCC 25618 / H37Rv</strain>
    </source>
</reference>
<reference key="3">
    <citation type="journal article" date="2005" name="Proc. Natl. Acad. Sci. U.S.A.">
        <title>Variant tricarboxylic acid cycle in Mycobacterium tuberculosis: identification of alpha-ketoglutarate decarboxylase.</title>
        <authorList>
            <person name="Tian J."/>
            <person name="Bryk R."/>
            <person name="Itoh M."/>
            <person name="Suematsu M."/>
            <person name="Nathan C."/>
        </authorList>
    </citation>
    <scope>FUNCTION AS A 2-OXOGLUTARATE DECARBOXYLASE</scope>
    <scope>CATALYTIC ACTIVITY</scope>
    <scope>COFACTOR</scope>
    <scope>KINETIC PARAMETERS</scope>
    <source>
        <strain>ATCC 25618 / H37Rv</strain>
    </source>
</reference>
<reference key="4">
    <citation type="journal article" date="2008" name="Mol. Microbiol.">
        <title>Regulation of glutamate metabolism by protein kinases in mycobacteria.</title>
        <authorList>
            <person name="O'Hare H.M."/>
            <person name="Duran R."/>
            <person name="Cervenansky C."/>
            <person name="Bellinzoni M."/>
            <person name="Wehenkel A.M."/>
            <person name="Pritsch O."/>
            <person name="Obal G."/>
            <person name="Baumgartner J."/>
            <person name="Vialaret J."/>
            <person name="Johnsson K."/>
            <person name="Alzari P.M."/>
        </authorList>
    </citation>
    <scope>INTERACTION WITH GARA</scope>
    <source>
        <strain>ATCC 25618 / H37Rv</strain>
    </source>
</reference>
<reference key="5">
    <citation type="journal article" date="2009" name="PLoS Pathog.">
        <title>An anaerobic-type alpha-ketoglutarate ferredoxin oxidoreductase completes the oxidative tricarboxylic acid cycle of Mycobacterium tuberculosis.</title>
        <authorList>
            <person name="Baughn A.D."/>
            <person name="Garforth S.J."/>
            <person name="Vilcheze C."/>
            <person name="Jacobs W.R. Jr."/>
        </authorList>
    </citation>
    <scope>DISRUPTION PHENOTYPE</scope>
    <scope>ROLE IN TCA CYCLE</scope>
    <source>
        <strain>ATCC 25618 / H37Rv</strain>
    </source>
</reference>
<reference key="6">
    <citation type="journal article" date="2009" name="Sci. Signal.">
        <title>An intramolecular switch regulates phosphoindependent FHA domain interactions in Mycobacterium tuberculosis.</title>
        <authorList>
            <person name="Nott T.J."/>
            <person name="Kelly G."/>
            <person name="Stach L."/>
            <person name="Li J."/>
            <person name="Westcott S."/>
            <person name="Patel D."/>
            <person name="Hunt D.M."/>
            <person name="Howell S."/>
            <person name="Buxton R.S."/>
            <person name="O'Hare H.M."/>
            <person name="Smerdon S.J."/>
        </authorList>
    </citation>
    <scope>ACTIVITY REGULATION</scope>
    <scope>INTERACTION WITH GARA</scope>
    <source>
        <strain>ATCC 25618 / H37Rv</strain>
    </source>
</reference>
<reference key="7">
    <citation type="journal article" date="2010" name="Chem. Biol.">
        <title>Activity-based metabolomic profiling of enzymatic function: identification of Rv1248c as a mycobacterial 2-hydroxy-3-oxoadipate synthase.</title>
        <authorList>
            <person name="de Carvalho L.P."/>
            <person name="Zhao H."/>
            <person name="Dickinson C.E."/>
            <person name="Arango N.M."/>
            <person name="Lima C.D."/>
            <person name="Fischer S.M."/>
            <person name="Ouerfelli O."/>
            <person name="Nathan C."/>
            <person name="Rhee K.Y."/>
        </authorList>
    </citation>
    <scope>FUNCTION AS A HOA SYNTHASE</scope>
    <scope>CATALYTIC ACTIVITY</scope>
    <scope>COFACTOR</scope>
    <scope>SUBSTRATE SPECIFICITY</scope>
    <scope>DISRUPTION PHENOTYPE</scope>
    <source>
        <strain>ATCC 25618 / H37Rv</strain>
    </source>
</reference>
<reference key="8">
    <citation type="journal article" date="2011" name="Chem. Biol.">
        <title>Functional plasticity and allosteric regulation of alpha-ketoglutarate decarboxylase in central mycobacterial metabolism.</title>
        <authorList>
            <person name="Wagner T."/>
            <person name="Bellinzoni M."/>
            <person name="Wehenkel A."/>
            <person name="O'Hare H.M."/>
            <person name="Alzari P.M."/>
        </authorList>
    </citation>
    <scope>FUNCTION AS A MULTIFUNCTIONAL ENZYME</scope>
    <scope>CATALYTIC ACTIVITY</scope>
    <scope>ACTIVITY REGULATION</scope>
    <source>
        <strain>ATCC 25618 / H37Rv</strain>
    </source>
</reference>
<reference key="9">
    <citation type="journal article" date="2011" name="Mol. Cell. Proteomics">
        <title>Proteogenomic analysis of Mycobacterium tuberculosis by high resolution mass spectrometry.</title>
        <authorList>
            <person name="Kelkar D.S."/>
            <person name="Kumar D."/>
            <person name="Kumar P."/>
            <person name="Balakrishnan L."/>
            <person name="Muthusamy B."/>
            <person name="Yadav A.K."/>
            <person name="Shrivastava P."/>
            <person name="Marimuthu A."/>
            <person name="Anand S."/>
            <person name="Sundaram H."/>
            <person name="Kingsbury R."/>
            <person name="Harsha H.C."/>
            <person name="Nair B."/>
            <person name="Prasad T.S."/>
            <person name="Chauhan D.S."/>
            <person name="Katoch K."/>
            <person name="Katoch V.M."/>
            <person name="Kumar P."/>
            <person name="Chaerkady R."/>
            <person name="Ramachandran S."/>
            <person name="Dash D."/>
            <person name="Pandey A."/>
        </authorList>
    </citation>
    <scope>IDENTIFICATION BY MASS SPECTROMETRY [LARGE SCALE ANALYSIS]</scope>
    <source>
        <strain>ATCC 25618 / H37Rv</strain>
    </source>
</reference>
<comment type="function">
    <text evidence="5 8 9 10">Shows three enzymatic activities that share a first common step, the attack of thiamine-PP on 2-oxoglutarate (alpha-ketoglutarate, KG), leading to the formation of an enamine-thiamine-PP intermediate upon decarboxylation. Thus, displays KGD activity, catalyzing the decarboxylation from five-carbon 2-oxoglutarate to four-carbon succinate semialdehyde (SSA). Also catalyzes C-C bond formation between the activated aldehyde formed after decarboxylation of alpha-ketoglutarate and the carbonyl of glyoxylate (GLX), to yield 2-hydroxy-3-oxoadipate (HOA), which spontaneously decarboxylates to form 5-hydroxylevulinate (HLA). And is also a component of the 2-oxoglutarate dehydrogenase (ODH) complex, that catalyzes the overall conversion of 2-oxoglutarate to succinyl-CoA and CO(2). The KG decarboxylase and KG dehydrogenase reactions provide two alternative, tightly regulated, pathways connecting the oxidative and reductive branches of the TCA cycle, which can endow M.tuberculosis with the metabolic plasticity required for growth on diverse host-derived carbon sources. Appears to play a predominant role in growth on carbohydrates as the sole carbon source, and only a minimal role during growth on fatty acids.</text>
</comment>
<comment type="catalytic activity">
    <reaction evidence="9">
        <text>glyoxylate + 2-oxoglutarate + H(+) = 2-hydroxy-3-oxoadipate + CO2</text>
        <dbReference type="Rhea" id="RHEA:14341"/>
        <dbReference type="ChEBI" id="CHEBI:15378"/>
        <dbReference type="ChEBI" id="CHEBI:16526"/>
        <dbReference type="ChEBI" id="CHEBI:16810"/>
        <dbReference type="ChEBI" id="CHEBI:36655"/>
        <dbReference type="ChEBI" id="CHEBI:57712"/>
        <dbReference type="EC" id="2.2.1.5"/>
    </reaction>
</comment>
<comment type="catalytic activity">
    <reaction evidence="5">
        <text>2-oxoglutarate + H(+) = succinate semialdehyde + CO2</text>
        <dbReference type="Rhea" id="RHEA:10524"/>
        <dbReference type="ChEBI" id="CHEBI:15378"/>
        <dbReference type="ChEBI" id="CHEBI:16526"/>
        <dbReference type="ChEBI" id="CHEBI:16810"/>
        <dbReference type="ChEBI" id="CHEBI:57706"/>
        <dbReference type="EC" id="4.1.1.71"/>
    </reaction>
</comment>
<comment type="catalytic activity">
    <reaction evidence="10">
        <text>N(6)-[(R)-lipoyl]-L-lysyl-[protein] + 2-oxoglutarate + H(+) = N(6)-[(R)-S(8)-succinyldihydrolipoyl]-L-lysyl-[protein] + CO2</text>
        <dbReference type="Rhea" id="RHEA:12188"/>
        <dbReference type="Rhea" id="RHEA-COMP:10474"/>
        <dbReference type="Rhea" id="RHEA-COMP:20092"/>
        <dbReference type="ChEBI" id="CHEBI:15378"/>
        <dbReference type="ChEBI" id="CHEBI:16526"/>
        <dbReference type="ChEBI" id="CHEBI:16810"/>
        <dbReference type="ChEBI" id="CHEBI:83099"/>
        <dbReference type="ChEBI" id="CHEBI:83120"/>
        <dbReference type="EC" id="1.2.4.2"/>
    </reaction>
</comment>
<comment type="catalytic activity">
    <reaction evidence="10">
        <text>N(6)-[(R)-dihydrolipoyl]-L-lysyl-[protein] + succinyl-CoA = N(6)-[(R)-S(8)-succinyldihydrolipoyl]-L-lysyl-[protein] + CoA</text>
        <dbReference type="Rhea" id="RHEA:15213"/>
        <dbReference type="Rhea" id="RHEA-COMP:10475"/>
        <dbReference type="Rhea" id="RHEA-COMP:20092"/>
        <dbReference type="ChEBI" id="CHEBI:57287"/>
        <dbReference type="ChEBI" id="CHEBI:57292"/>
        <dbReference type="ChEBI" id="CHEBI:83100"/>
        <dbReference type="ChEBI" id="CHEBI:83120"/>
        <dbReference type="EC" id="2.3.1.61"/>
    </reaction>
</comment>
<comment type="cofactor">
    <cofactor evidence="5 9">
        <name>Mg(2+)</name>
        <dbReference type="ChEBI" id="CHEBI:18420"/>
    </cofactor>
</comment>
<comment type="cofactor">
    <cofactor evidence="5 9">
        <name>thiamine diphosphate</name>
        <dbReference type="ChEBI" id="CHEBI:58937"/>
    </cofactor>
</comment>
<comment type="activity regulation">
    <text evidence="7 10">Alpha-ketoglutarate dehydrogenase and decarboxylase activities are inhibited by unphosphorylated GarA, and allosterically activated by acetyl-CoA, the main substrate of the TCA cycle.</text>
</comment>
<comment type="biophysicochemical properties">
    <kinetics>
        <KM evidence="5">0.48 mM for 2-oxoglutarate</KM>
        <KM evidence="5">0.196 mM for magnesium ions</KM>
        <KM evidence="5">0.019 mM for thiamine pyrophosphate</KM>
    </kinetics>
</comment>
<comment type="pathway">
    <text>Carbohydrate metabolism; tricarboxylic acid cycle; succinate from 2-oxoglutarate (transferase route): step 1/2.</text>
</comment>
<comment type="pathway">
    <text>Carbohydrate metabolism; tricarboxylic acid cycle; succinyl-CoA from 2-oxoglutarate (dehydrogenase route): step 1/1.</text>
</comment>
<comment type="subunit">
    <text evidence="1 6 7">Homodimer (By similarity). The 2-oxoglutarate dehydrogenase (ODH) complex contains multiple copies of three enzymatic components: 2-oxoglutarate dehydrogenase (E1), dihydrolipoamide succinyltransferase (E2) and lipoamide dehydrogenase (E3) (By similarity). Interacts with the FHA domain of unphosphorylated GarA.</text>
</comment>
<comment type="interaction">
    <interactant intactId="EBI-6405560">
        <id>P9WIS5</id>
    </interactant>
    <interactant intactId="EBI-6405522">
        <id>P9WJA9</id>
        <label>garA</label>
    </interactant>
    <organismsDiffer>false</organismsDiffer>
    <experiments>4</experiments>
</comment>
<comment type="domain">
    <text evidence="1">Is a fusion protein with two major domains exhibiting structural features of an E1 and E2 protein, and a short sequence stretch of E1 localized at the N-terminus, which is connected by a linker region to the rest of the protein.</text>
</comment>
<comment type="disruption phenotype">
    <text evidence="8 9">Attempts to disrupt Rv1248c in M.tuberculosis H37Rv and Erdman strains by homologous recombination were unsuccessful, raising the possibility that Rv1248c may be essential (PubMed:20416504). However, deletion mutants were readily obtained in a strain derived from H37Rv in PubMed:19936047. The mutant strain grows as well as wild-type in medium containing both carbohydrates (dextrose and glycerol) and fatty acids, under a CO(2) enriched atmosphere, but shows a marked growth defect when grown in medium containing carbohydrates as the sole carbon source in the presence of CO(2). Simultaneous disruption of korAB and kgd results in strict dependence upon the glyoxylate shunt for growth. Growth of the kgd mutant strain on fatty acids as the sole carbon source is similar to that of the wild type strain regardless of the presence of CO(2). But cells lacking both korAB and kgd is significantly more retarded for growth on fatty acids than is either korAB or kgd deleted mutant alone.</text>
</comment>
<comment type="similarity">
    <text evidence="13">Belongs to the 2-oxoacid dehydrogenase family. Kgd subfamily.</text>
</comment>
<comment type="caution">
    <text evidence="14 15">Was originally annotated as sucA because of sequence similarity (PubMed:12218036, PubMed:9634230). But this protein was shown not to be able to serve as the E1 component of 2-oxoglutarate dehydrogenase (ODH) (PubMed:16045627). However, it was later shown that this protein does in fact sustain ODH activity, and requires specific activation by acetyl-CoA (PubMed:21867916).</text>
</comment>
<protein>
    <recommendedName>
        <fullName>Multifunctional 2-oxoglutarate metabolism enzyme</fullName>
    </recommendedName>
    <alternativeName>
        <fullName evidence="12">2-hydroxy-3-oxoadipate synthase</fullName>
        <shortName evidence="12">HOA synthase</shortName>
        <shortName>HOAS</shortName>
        <ecNumber evidence="9">2.2.1.5</ecNumber>
    </alternativeName>
    <alternativeName>
        <fullName>2-oxoglutarate carboxy-lyase</fullName>
    </alternativeName>
    <alternativeName>
        <fullName>2-oxoglutarate decarboxylase</fullName>
    </alternativeName>
    <alternativeName>
        <fullName evidence="11">Alpha-ketoglutarate decarboxylase</fullName>
        <shortName>KG decarboxylase</shortName>
        <shortName>KGD</shortName>
        <ecNumber evidence="5">4.1.1.71</ecNumber>
    </alternativeName>
    <alternativeName>
        <fullName>Alpha-ketoglutarate-glyoxylate carboligase</fullName>
    </alternativeName>
    <domain>
        <recommendedName>
            <fullName>2-oxoglutarate dehydrogenase E1 component</fullName>
            <shortName>ODH E1 component</shortName>
            <ecNumber evidence="10">1.2.4.2</ecNumber>
        </recommendedName>
        <alternativeName>
            <fullName>Alpha-ketoglutarate dehydrogenase E1 component</fullName>
            <shortName>KDH E1 component</shortName>
        </alternativeName>
    </domain>
    <domain>
        <recommendedName>
            <fullName>Dihydrolipoyllysine-residue succinyltransferase component of 2-oxoglutarate dehydrogenase complex</fullName>
            <ecNumber evidence="10">2.3.1.61</ecNumber>
        </recommendedName>
        <alternativeName>
            <fullName>2-oxoglutarate dehydrogenase complex E2 component</fullName>
            <shortName>ODH E2 component</shortName>
            <shortName>OGDC-E2</shortName>
        </alternativeName>
        <alternativeName>
            <fullName>Dihydrolipoamide succinyltransferase</fullName>
        </alternativeName>
    </domain>
</protein>
<name>KGD_MYCTU</name>
<sequence length="1231" mass="135902">MANISSPFGQNEWLVEEMYRKFRDDPSSVDPSWHEFLVDYSPEPTSQPAAEPTRVTSPLVAERAAAAAPQAPPKPADTAAAGNGVVAALAAKTAVPPPAEGDEVAVLRGAAAAVVKNMSASLEVPTATSVRAVPAKLLIDNRIVINNQLKRTRGGKISFTHLLGYALVQAVKKFPNMNRHYTEVDGKPTAVTPAHTNLGLAIDLQGKDGKRSLVVAGIKRCETMRFAQFVTAYEDIVRRARDGKLTTEDFAGVTISLTNPGTIGTVHSVPRLMPGQGAIIGVGAMEYPAEFQGASEERIAELGIGKLITLTSTYDHRIIQGAESGDFLRTIHELLLSDGFWDEVFRELSIPYLPVRWSTDNPDSIVDKNARVMNLIAAYRNRGHLMADTDPLRLDKARFRSHPDLEVLTHGLTLWDLDRVFKVDGFAGAQYKKLRDVLGLLRDAYCRHIGVEYAHILDPEQKEWLEQRVETKHVKPTVAQQKYILSKLNAAEAFETFLQTKYVGQKRFSLEGAESVIPMMDAAIDQCAEHGLDEVVIGMPHRGRLNVLANIVGKPYSQIFTEFEGNLNPSQAHGSGDVKYHLGATGLYLQMFGDNDIQVSLTANPSHLEAVDPVLEGLVRAKQDLLDHGSIDSDGQRAFSVVPLMLHGDAAFAGQGVVAETLNLANLPGYRVGGTIHIIVNNQIGFTTAPEYSRSSEYCTDVAKMIGAPIFHVNGDDPEACVWVARLAVDFRQRFKKDVVIDMLCYRRRGHNEGDDPSMTNPYVYDVVDTKRGARKSYTEALIGRGDISMKEAEDALRDYQGQLERVFNEVRELEKHGVQPSESVESDQMIPAGLATAVDKSLLARIGDAFLALPNGFTAHPRVQPVLEKRREMAYEGKIDWAFGELLALGSLVAEGKLVRLSGQDSRRGTFSQRHSVLIDRHTGEEFTPLQLLATNSDGSPTGGKFLVYDSPLSEYAAVGFEYGYTVGNPDAVVLWEAQFGDFVNGAQSIIDEFISSGEAKWGQLSNVVLLLPHGHEGQGPDHTSARIERFLQLWAEGSMTIAMPSTPSNYFHLLRRHALDGIQRPLIVFTPKSMLRHKAAVSEIKDFTEIKFRSVLEEPTYEDGIGDRNKVSRILLTSGKLYYELAARKAKDNRNDLAIVRLEQLAPLPRRRLRETLDRYENVKEFFWVQEEPANQGAWPRFGLELPELLPDKLAGIKRISRRAMSAPSSGSSKVHAVEQQEILDEAFG</sequence>